<sequence>MMSSRTQDADGASIRFSDHTLDKATKAKVTLENYYSNLVTQYGERKQRLAKLEAQLKDESLSEAQRQEKRLQHAQKETEYLRLKRLRLGVEDFEALKVIGRGAFGEVRLVQKKDTGHVYAMKVLRKADMLEKEQVAHVRAERDVLVEADHQWVVKMYYSFQDPVNLYLIMEFLPGGDMMTLLMKKDTLSEEGTQFYISETALAIDSIHKLGFIHRDIKPDNLLLDARGHLKLSDFGLCTGLKKSHRTDFYRDLSQAKPSDFIGTCASLSCSPMDSKRRAESWKRNRRALAYSTVGTPDYIAPEVFLQTGYGPACDWWSLGVIMYEMLMGYPPFCSDNPQDTYRKVMNWRETLIFPPEIPISEEAKETIINFCCEADRRLGSQRGLEDLKSVPFFRGVDWEHIRERPAAIPVEVRSIDDTSNFDEFPDVSLEIPSAPIPQGGEIAKDWVFINYTYKRFEVRNLE</sequence>
<gene>
    <name evidence="13 21" type="primary">trc</name>
    <name evidence="21" type="ORF">CG8637</name>
</gene>
<keyword id="KW-0025">Alternative splicing</keyword>
<keyword id="KW-0067">ATP-binding</keyword>
<keyword id="KW-0963">Cytoplasm</keyword>
<keyword id="KW-0418">Kinase</keyword>
<keyword id="KW-0460">Magnesium</keyword>
<keyword id="KW-0479">Metal-binding</keyword>
<keyword id="KW-0547">Nucleotide-binding</keyword>
<keyword id="KW-0539">Nucleus</keyword>
<keyword id="KW-0597">Phosphoprotein</keyword>
<keyword id="KW-1185">Reference proteome</keyword>
<keyword id="KW-0723">Serine/threonine-protein kinase</keyword>
<keyword id="KW-0808">Transferase</keyword>
<proteinExistence type="evidence at protein level"/>
<comment type="function">
    <text evidence="5 7 9">Serine/threonine-protein kinase involved in controlling cell structure and proliferation of a variety of polarized outgrowths including epidermal hairs, bristles, arista laterals, and dendrites (PubMed:11102376, PubMed:15479641, PubMed:32022690). Together with fry, maintains the integrity of epidermal hairs and is an essential component of the signaling pathway regulating dendritic branching of sensory neurons (PubMed:15479641). Reduces neurite outgrowth by phosphorylating pav, thereby inhibiting its function in microtubule-microtubule sliding (PubMed:32022690).</text>
</comment>
<comment type="catalytic activity">
    <reaction evidence="7 16">
        <text>L-seryl-[protein] + ATP = O-phospho-L-seryl-[protein] + ADP + H(+)</text>
        <dbReference type="Rhea" id="RHEA:17989"/>
        <dbReference type="Rhea" id="RHEA-COMP:9863"/>
        <dbReference type="Rhea" id="RHEA-COMP:11604"/>
        <dbReference type="ChEBI" id="CHEBI:15378"/>
        <dbReference type="ChEBI" id="CHEBI:29999"/>
        <dbReference type="ChEBI" id="CHEBI:30616"/>
        <dbReference type="ChEBI" id="CHEBI:83421"/>
        <dbReference type="ChEBI" id="CHEBI:456216"/>
        <dbReference type="EC" id="2.7.11.1"/>
    </reaction>
</comment>
<comment type="catalytic activity">
    <reaction evidence="7 16">
        <text>L-threonyl-[protein] + ATP = O-phospho-L-threonyl-[protein] + ADP + H(+)</text>
        <dbReference type="Rhea" id="RHEA:46608"/>
        <dbReference type="Rhea" id="RHEA-COMP:11060"/>
        <dbReference type="Rhea" id="RHEA-COMP:11605"/>
        <dbReference type="ChEBI" id="CHEBI:15378"/>
        <dbReference type="ChEBI" id="CHEBI:30013"/>
        <dbReference type="ChEBI" id="CHEBI:30616"/>
        <dbReference type="ChEBI" id="CHEBI:61977"/>
        <dbReference type="ChEBI" id="CHEBI:456216"/>
        <dbReference type="EC" id="2.7.11.1"/>
    </reaction>
</comment>
<comment type="cofactor">
    <cofactor evidence="7">
        <name>Mg(2+)</name>
        <dbReference type="ChEBI" id="CHEBI:18420"/>
    </cofactor>
</comment>
<comment type="activity regulation">
    <text evidence="9">Activated by fry.</text>
</comment>
<comment type="subunit">
    <text evidence="8">Interacts with, and is activated by, Mob1.</text>
</comment>
<comment type="interaction">
    <interactant intactId="EBI-15596484">
        <id>Q9NBK5-2</id>
    </interactant>
    <interactant intactId="EBI-101858">
        <id>Q8T0S6</id>
        <label>hpo</label>
    </interactant>
    <organismsDiffer>false</organismsDiffer>
    <experiments>2</experiments>
</comment>
<comment type="subcellular location">
    <subcellularLocation>
        <location evidence="5 8">Cytoplasm</location>
    </subcellularLocation>
    <subcellularLocation>
        <location evidence="5 8">Nucleus</location>
    </subcellularLocation>
    <text evidence="5 8">Trc colocalizes with Mob1 to the cell periphery in wing cells and wing hairs.</text>
</comment>
<comment type="alternative products">
    <event type="alternative splicing"/>
    <isoform>
        <id>Q9NBK5-1</id>
        <name evidence="5">D</name>
        <sequence type="displayed"/>
    </isoform>
    <isoform>
        <id>Q9NBK5-2</id>
        <name evidence="6">A</name>
        <sequence type="described" ref="VSP_052342"/>
    </isoform>
    <isoform>
        <id>Q9NBK5-3</id>
        <name evidence="5">B</name>
        <name evidence="5">trc-S</name>
        <sequence type="described" ref="VSP_052342 VSP_052343 VSP_052344"/>
    </isoform>
    <isoform>
        <id>Q9NBK5-4</id>
        <name evidence="5">C</name>
        <name evidence="5">trc-L</name>
        <sequence type="described" ref="VSP_052343 VSP_052344"/>
    </isoform>
</comment>
<comment type="tissue specificity">
    <text evidence="5 7 9">Expressed in the peripheral and central nervous system (at protein level) (PubMed:15479641, PubMed:32022690). Expressed in the wing imaginal disk (PubMed:11102376).</text>
</comment>
<comment type="disruption phenotype">
    <text evidence="5 7 9">Results in splitting or branching of epidermal hairs, supernumerary terminal branching and defective dendritic tiling (PubMed:11102376, PubMed:15479641). RNAi-mediated knockdown in neurons increases dendrite length of sensory neurons (PubMed:32022690).</text>
</comment>
<comment type="similarity">
    <text evidence="15">Belongs to the protein kinase superfamily. AGC Ser/Thr protein kinase family.</text>
</comment>
<organism>
    <name type="scientific">Drosophila melanogaster</name>
    <name type="common">Fruit fly</name>
    <dbReference type="NCBI Taxonomy" id="7227"/>
    <lineage>
        <taxon>Eukaryota</taxon>
        <taxon>Metazoa</taxon>
        <taxon>Ecdysozoa</taxon>
        <taxon>Arthropoda</taxon>
        <taxon>Hexapoda</taxon>
        <taxon>Insecta</taxon>
        <taxon>Pterygota</taxon>
        <taxon>Neoptera</taxon>
        <taxon>Endopterygota</taxon>
        <taxon>Diptera</taxon>
        <taxon>Brachycera</taxon>
        <taxon>Muscomorpha</taxon>
        <taxon>Ephydroidea</taxon>
        <taxon>Drosophilidae</taxon>
        <taxon>Drosophila</taxon>
        <taxon>Sophophora</taxon>
    </lineage>
</organism>
<feature type="chain" id="PRO_0000279717" description="Serine/threonine-protein kinase tricornered">
    <location>
        <begin position="1"/>
        <end position="463"/>
    </location>
</feature>
<feature type="domain" description="Protein kinase" evidence="1">
    <location>
        <begin position="93"/>
        <end position="394"/>
    </location>
</feature>
<feature type="domain" description="AGC-kinase C-terminal" evidence="2">
    <location>
        <begin position="395"/>
        <end position="463"/>
    </location>
</feature>
<feature type="region of interest" description="Interaction with mats and Mob1" evidence="8">
    <location>
        <begin position="119"/>
        <end position="180"/>
    </location>
</feature>
<feature type="active site" description="Proton acceptor" evidence="1 3">
    <location>
        <position position="216"/>
    </location>
</feature>
<feature type="binding site" evidence="1">
    <location>
        <begin position="99"/>
        <end position="107"/>
    </location>
    <ligand>
        <name>ATP</name>
        <dbReference type="ChEBI" id="CHEBI:30616"/>
    </ligand>
</feature>
<feature type="binding site" evidence="1">
    <location>
        <position position="122"/>
    </location>
    <ligand>
        <name>ATP</name>
        <dbReference type="ChEBI" id="CHEBI:30616"/>
    </ligand>
</feature>
<feature type="modified residue" description="Phosphoserine" evidence="7">
    <location>
        <position position="292"/>
    </location>
</feature>
<feature type="modified residue" description="Phosphothreonine" evidence="7">
    <location>
        <position position="453"/>
    </location>
</feature>
<feature type="splice variant" id="VSP_052342" description="In isoform A and isoform B." evidence="11 12 14">
    <location>
        <begin position="267"/>
        <end position="270"/>
    </location>
</feature>
<feature type="splice variant" id="VSP_052343" description="In isoform B and isoform C." evidence="11 14">
    <original>EI</original>
    <variation>RD</variation>
    <location>
        <begin position="357"/>
        <end position="358"/>
    </location>
</feature>
<feature type="splice variant" id="VSP_052344" description="In isoform B and isoform C." evidence="11 14">
    <original>RERPAAIPV</original>
    <variation>LAAPYL</variation>
    <location>
        <begin position="403"/>
        <end position="411"/>
    </location>
</feature>
<feature type="mutagenesis site" description="Loss of catalytic activity; increases microtubule sliding (in vitro)." evidence="9">
    <original>K</original>
    <variation>A</variation>
    <location>
        <position position="122"/>
    </location>
</feature>
<feature type="mutagenesis site" description="Excessive dendritic branching." evidence="7">
    <original>S</original>
    <variation>A</variation>
    <location>
        <position position="292"/>
    </location>
</feature>
<feature type="mutagenesis site" description="Excessive dendritic branching." evidence="7">
    <original>T</original>
    <variation>A</variation>
    <location>
        <position position="453"/>
    </location>
</feature>
<feature type="mutagenesis site" description="Constitutively active kinase; reduces microtubule sliding to similar levels of wild-type (in vitro)." evidence="9">
    <original>T</original>
    <variation>E</variation>
    <location>
        <position position="453"/>
    </location>
</feature>
<feature type="sequence conflict" description="In Ref. 1; CAA84486 and 2; AAF67167/AAF67168." evidence="15" ref="1 2">
    <original>LGSQRGLEDLKS</original>
    <variation>WVPASSGGSEV</variation>
    <location>
        <begin position="379"/>
        <end position="390"/>
    </location>
</feature>
<dbReference type="EC" id="2.7.11.1" evidence="7 16"/>
<dbReference type="EMBL" id="Z35103">
    <property type="protein sequence ID" value="CAA84486.1"/>
    <property type="molecule type" value="mRNA"/>
</dbReference>
<dbReference type="EMBL" id="AF238490">
    <property type="protein sequence ID" value="AAF67167.1"/>
    <property type="molecule type" value="mRNA"/>
</dbReference>
<dbReference type="EMBL" id="AF239171">
    <property type="protein sequence ID" value="AAF67168.1"/>
    <property type="molecule type" value="mRNA"/>
</dbReference>
<dbReference type="EMBL" id="AF247814">
    <property type="protein sequence ID" value="AAF97511.1"/>
    <property type="molecule type" value="Genomic_DNA"/>
</dbReference>
<dbReference type="EMBL" id="AE014296">
    <property type="protein sequence ID" value="AAF49104.1"/>
    <property type="molecule type" value="Genomic_DNA"/>
</dbReference>
<dbReference type="EMBL" id="AY051880">
    <property type="protein sequence ID" value="AAK93304.1"/>
    <property type="molecule type" value="mRNA"/>
</dbReference>
<dbReference type="RefSeq" id="NP_001262071.1">
    <molecule id="Q9NBK5-1"/>
    <property type="nucleotide sequence ID" value="NM_001275142.1"/>
</dbReference>
<dbReference type="RefSeq" id="NP_524170.2">
    <molecule id="Q9NBK5-2"/>
    <property type="nucleotide sequence ID" value="NM_079446.4"/>
</dbReference>
<dbReference type="SMR" id="Q9NBK5"/>
<dbReference type="BioGRID" id="65434">
    <property type="interactions" value="20"/>
</dbReference>
<dbReference type="DIP" id="DIP-21479N"/>
<dbReference type="FunCoup" id="Q9NBK5">
    <property type="interactions" value="1543"/>
</dbReference>
<dbReference type="IntAct" id="Q9NBK5">
    <property type="interactions" value="3"/>
</dbReference>
<dbReference type="MINT" id="Q9NBK5"/>
<dbReference type="STRING" id="7227.FBpp0304464"/>
<dbReference type="iPTMnet" id="Q9NBK5"/>
<dbReference type="PaxDb" id="7227-FBpp0304464"/>
<dbReference type="DNASU" id="40165"/>
<dbReference type="EnsemblMetazoa" id="FBtr0074922">
    <molecule id="Q9NBK5-2"/>
    <property type="protein sequence ID" value="FBpp0074691"/>
    <property type="gene ID" value="FBgn0003744"/>
</dbReference>
<dbReference type="EnsemblMetazoa" id="FBtr0332154">
    <molecule id="Q9NBK5-1"/>
    <property type="protein sequence ID" value="FBpp0304464"/>
    <property type="gene ID" value="FBgn0003744"/>
</dbReference>
<dbReference type="GeneID" id="40165"/>
<dbReference type="KEGG" id="dme:Dmel_CG8637"/>
<dbReference type="AGR" id="FB:FBgn0003744"/>
<dbReference type="CTD" id="40165"/>
<dbReference type="FlyBase" id="FBgn0003744">
    <property type="gene designation" value="trc"/>
</dbReference>
<dbReference type="VEuPathDB" id="VectorBase:FBgn0003744"/>
<dbReference type="eggNOG" id="KOG0605">
    <property type="taxonomic scope" value="Eukaryota"/>
</dbReference>
<dbReference type="GeneTree" id="ENSGT00940000153544"/>
<dbReference type="InParanoid" id="Q9NBK5"/>
<dbReference type="OMA" id="HDNAYYQ"/>
<dbReference type="OrthoDB" id="3638488at2759"/>
<dbReference type="PhylomeDB" id="Q9NBK5"/>
<dbReference type="Reactome" id="R-DME-9013418">
    <property type="pathway name" value="RHOBTB2 GTPase cycle"/>
</dbReference>
<dbReference type="Reactome" id="R-DME-9013422">
    <property type="pathway name" value="RHOBTB1 GTPase cycle"/>
</dbReference>
<dbReference type="SignaLink" id="Q9NBK5"/>
<dbReference type="BioGRID-ORCS" id="40165">
    <property type="hits" value="1 hit in 3 CRISPR screens"/>
</dbReference>
<dbReference type="GenomeRNAi" id="40165"/>
<dbReference type="PRO" id="PR:Q9NBK5"/>
<dbReference type="Proteomes" id="UP000000803">
    <property type="component" value="Chromosome 3L"/>
</dbReference>
<dbReference type="Bgee" id="FBgn0003744">
    <property type="expression patterns" value="Expressed in adult abdomen and 173 other cell types or tissues"/>
</dbReference>
<dbReference type="ExpressionAtlas" id="Q9NBK5">
    <property type="expression patterns" value="baseline and differential"/>
</dbReference>
<dbReference type="GO" id="GO:0030424">
    <property type="term" value="C:axon"/>
    <property type="evidence" value="ECO:0000314"/>
    <property type="project" value="FlyBase"/>
</dbReference>
<dbReference type="GO" id="GO:0044297">
    <property type="term" value="C:cell body"/>
    <property type="evidence" value="ECO:0000314"/>
    <property type="project" value="FlyBase"/>
</dbReference>
<dbReference type="GO" id="GO:0005938">
    <property type="term" value="C:cell cortex"/>
    <property type="evidence" value="ECO:0000314"/>
    <property type="project" value="FlyBase"/>
</dbReference>
<dbReference type="GO" id="GO:0070451">
    <property type="term" value="C:cell hair"/>
    <property type="evidence" value="ECO:0000314"/>
    <property type="project" value="FlyBase"/>
</dbReference>
<dbReference type="GO" id="GO:0071944">
    <property type="term" value="C:cell periphery"/>
    <property type="evidence" value="ECO:0000314"/>
    <property type="project" value="FlyBase"/>
</dbReference>
<dbReference type="GO" id="GO:0005737">
    <property type="term" value="C:cytoplasm"/>
    <property type="evidence" value="ECO:0000314"/>
    <property type="project" value="UniProtKB"/>
</dbReference>
<dbReference type="GO" id="GO:0030425">
    <property type="term" value="C:dendrite"/>
    <property type="evidence" value="ECO:0000314"/>
    <property type="project" value="FlyBase"/>
</dbReference>
<dbReference type="GO" id="GO:0005634">
    <property type="term" value="C:nucleus"/>
    <property type="evidence" value="ECO:0000314"/>
    <property type="project" value="FlyBase"/>
</dbReference>
<dbReference type="GO" id="GO:0005524">
    <property type="term" value="F:ATP binding"/>
    <property type="evidence" value="ECO:0000250"/>
    <property type="project" value="UniProtKB"/>
</dbReference>
<dbReference type="GO" id="GO:0046872">
    <property type="term" value="F:metal ion binding"/>
    <property type="evidence" value="ECO:0007669"/>
    <property type="project" value="UniProtKB-KW"/>
</dbReference>
<dbReference type="GO" id="GO:0106310">
    <property type="term" value="F:protein serine kinase activity"/>
    <property type="evidence" value="ECO:0007669"/>
    <property type="project" value="RHEA"/>
</dbReference>
<dbReference type="GO" id="GO:0004674">
    <property type="term" value="F:protein serine/threonine kinase activity"/>
    <property type="evidence" value="ECO:0000314"/>
    <property type="project" value="UniProtKB"/>
</dbReference>
<dbReference type="GO" id="GO:0048800">
    <property type="term" value="P:antennal morphogenesis"/>
    <property type="evidence" value="ECO:0000315"/>
    <property type="project" value="FlyBase"/>
</dbReference>
<dbReference type="GO" id="GO:0022416">
    <property type="term" value="P:chaeta development"/>
    <property type="evidence" value="ECO:0000315"/>
    <property type="project" value="FlyBase"/>
</dbReference>
<dbReference type="GO" id="GO:0048813">
    <property type="term" value="P:dendrite morphogenesis"/>
    <property type="evidence" value="ECO:0000315"/>
    <property type="project" value="FlyBase"/>
</dbReference>
<dbReference type="GO" id="GO:0070593">
    <property type="term" value="P:dendrite self-avoidance"/>
    <property type="evidence" value="ECO:0000316"/>
    <property type="project" value="FlyBase"/>
</dbReference>
<dbReference type="GO" id="GO:0035317">
    <property type="term" value="P:imaginal disc-derived wing hair organization"/>
    <property type="evidence" value="ECO:0000315"/>
    <property type="project" value="FlyBase"/>
</dbReference>
<dbReference type="GO" id="GO:0007476">
    <property type="term" value="P:imaginal disc-derived wing morphogenesis"/>
    <property type="evidence" value="ECO:0000315"/>
    <property type="project" value="FlyBase"/>
</dbReference>
<dbReference type="GO" id="GO:0035556">
    <property type="term" value="P:intracellular signal transduction"/>
    <property type="evidence" value="ECO:0000314"/>
    <property type="project" value="UniProtKB"/>
</dbReference>
<dbReference type="GO" id="GO:0051012">
    <property type="term" value="P:microtubule sliding"/>
    <property type="evidence" value="ECO:0000315"/>
    <property type="project" value="UniProtKB"/>
</dbReference>
<dbReference type="GO" id="GO:0150013">
    <property type="term" value="P:negative regulation of neuron projection arborization"/>
    <property type="evidence" value="ECO:0000315"/>
    <property type="project" value="UniProtKB"/>
</dbReference>
<dbReference type="GO" id="GO:0018105">
    <property type="term" value="P:peptidyl-serine phosphorylation"/>
    <property type="evidence" value="ECO:0000315"/>
    <property type="project" value="UniProtKB"/>
</dbReference>
<dbReference type="GO" id="GO:0006468">
    <property type="term" value="P:protein phosphorylation"/>
    <property type="evidence" value="ECO:0000314"/>
    <property type="project" value="UniProtKB"/>
</dbReference>
<dbReference type="GO" id="GO:0050773">
    <property type="term" value="P:regulation of dendrite development"/>
    <property type="evidence" value="ECO:0000315"/>
    <property type="project" value="UniProtKB"/>
</dbReference>
<dbReference type="GO" id="GO:0048814">
    <property type="term" value="P:regulation of dendrite morphogenesis"/>
    <property type="evidence" value="ECO:0000315"/>
    <property type="project" value="FlyBase"/>
</dbReference>
<dbReference type="GO" id="GO:0007165">
    <property type="term" value="P:signal transduction"/>
    <property type="evidence" value="ECO:0000315"/>
    <property type="project" value="UniProtKB"/>
</dbReference>
<dbReference type="CDD" id="cd21780">
    <property type="entry name" value="MobB_Trc-like"/>
    <property type="match status" value="1"/>
</dbReference>
<dbReference type="CDD" id="cd05599">
    <property type="entry name" value="STKc_NDR_like"/>
    <property type="match status" value="1"/>
</dbReference>
<dbReference type="FunFam" id="1.10.510.10:FF:000057">
    <property type="entry name" value="Non-specific serine/threonine protein kinase"/>
    <property type="match status" value="1"/>
</dbReference>
<dbReference type="FunFam" id="1.10.510.10:FF:000086">
    <property type="entry name" value="Non-specific serine/threonine protein kinase"/>
    <property type="match status" value="1"/>
</dbReference>
<dbReference type="FunFam" id="3.30.200.20:FF:000393">
    <property type="entry name" value="Non-specific serine/threonine protein kinase"/>
    <property type="match status" value="1"/>
</dbReference>
<dbReference type="FunFam" id="3.30.200.20:FF:000344">
    <property type="entry name" value="Serine/threonine-protein kinase WARTS homolog"/>
    <property type="match status" value="1"/>
</dbReference>
<dbReference type="Gene3D" id="3.30.200.20">
    <property type="entry name" value="Phosphorylase Kinase, domain 1"/>
    <property type="match status" value="1"/>
</dbReference>
<dbReference type="Gene3D" id="1.10.510.10">
    <property type="entry name" value="Transferase(Phosphotransferase) domain 1"/>
    <property type="match status" value="1"/>
</dbReference>
<dbReference type="InterPro" id="IPR000961">
    <property type="entry name" value="AGC-kinase_C"/>
</dbReference>
<dbReference type="InterPro" id="IPR011009">
    <property type="entry name" value="Kinase-like_dom_sf"/>
</dbReference>
<dbReference type="InterPro" id="IPR017892">
    <property type="entry name" value="Pkinase_C"/>
</dbReference>
<dbReference type="InterPro" id="IPR000719">
    <property type="entry name" value="Prot_kinase_dom"/>
</dbReference>
<dbReference type="InterPro" id="IPR017441">
    <property type="entry name" value="Protein_kinase_ATP_BS"/>
</dbReference>
<dbReference type="InterPro" id="IPR050839">
    <property type="entry name" value="Rho-assoc_Ser/Thr_Kinase"/>
</dbReference>
<dbReference type="InterPro" id="IPR008271">
    <property type="entry name" value="Ser/Thr_kinase_AS"/>
</dbReference>
<dbReference type="PANTHER" id="PTHR22988:SF76">
    <property type="entry name" value="CHROMOSOME UNDETERMINED SCAFFOLD_135, WHOLE GENOME SHOTGUN SEQUENCE"/>
    <property type="match status" value="1"/>
</dbReference>
<dbReference type="PANTHER" id="PTHR22988">
    <property type="entry name" value="MYOTONIC DYSTROPHY S/T KINASE-RELATED"/>
    <property type="match status" value="1"/>
</dbReference>
<dbReference type="Pfam" id="PF00069">
    <property type="entry name" value="Pkinase"/>
    <property type="match status" value="2"/>
</dbReference>
<dbReference type="Pfam" id="PF00433">
    <property type="entry name" value="Pkinase_C"/>
    <property type="match status" value="1"/>
</dbReference>
<dbReference type="SMART" id="SM00220">
    <property type="entry name" value="S_TKc"/>
    <property type="match status" value="1"/>
</dbReference>
<dbReference type="SUPFAM" id="SSF56112">
    <property type="entry name" value="Protein kinase-like (PK-like)"/>
    <property type="match status" value="1"/>
</dbReference>
<dbReference type="PROSITE" id="PS51285">
    <property type="entry name" value="AGC_KINASE_CTER"/>
    <property type="match status" value="1"/>
</dbReference>
<dbReference type="PROSITE" id="PS00107">
    <property type="entry name" value="PROTEIN_KINASE_ATP"/>
    <property type="match status" value="1"/>
</dbReference>
<dbReference type="PROSITE" id="PS50011">
    <property type="entry name" value="PROTEIN_KINASE_DOM"/>
    <property type="match status" value="1"/>
</dbReference>
<dbReference type="PROSITE" id="PS00108">
    <property type="entry name" value="PROTEIN_KINASE_ST"/>
    <property type="match status" value="1"/>
</dbReference>
<name>TRC_DROME</name>
<reference evidence="15 20" key="1">
    <citation type="journal article" date="1995" name="Proc. Natl. Acad. Sci. U.S.A.">
        <title>Molecular cloning and characterization of a conserved nuclear serine/threonine protein kinase.</title>
        <authorList>
            <person name="Millward T.A."/>
            <person name="Cron P."/>
            <person name="Hemmings B.A."/>
        </authorList>
    </citation>
    <scope>NUCLEOTIDE SEQUENCE [MRNA] (ISOFORM B)</scope>
    <source>
        <strain evidence="20">Canton-S</strain>
        <tissue evidence="10">Embryo</tissue>
    </source>
</reference>
<reference evidence="15 18" key="2">
    <citation type="journal article" date="2000" name="Genetics">
        <title>The tricornered gene, which is required for the integrity of epidermal cell extensions, encodes the Drosophila nuclear DBF2-related kinase.</title>
        <authorList>
            <person name="Geng W."/>
            <person name="He B."/>
            <person name="Wang M."/>
            <person name="Adler P.N."/>
        </authorList>
    </citation>
    <scope>NUCLEOTIDE SEQUENCE [GENOMIC DNA / MRNA] (ISOFORMS B; C AND D)</scope>
    <scope>FUNCTION</scope>
    <scope>SUBCELLULAR LOCATION</scope>
    <scope>TISSUE SPECIFICITY</scope>
    <scope>DISRUPTION PHENOTYPE</scope>
</reference>
<reference evidence="17" key="3">
    <citation type="journal article" date="2000" name="Science">
        <title>The genome sequence of Drosophila melanogaster.</title>
        <authorList>
            <person name="Adams M.D."/>
            <person name="Celniker S.E."/>
            <person name="Holt R.A."/>
            <person name="Evans C.A."/>
            <person name="Gocayne J.D."/>
            <person name="Amanatides P.G."/>
            <person name="Scherer S.E."/>
            <person name="Li P.W."/>
            <person name="Hoskins R.A."/>
            <person name="Galle R.F."/>
            <person name="George R.A."/>
            <person name="Lewis S.E."/>
            <person name="Richards S."/>
            <person name="Ashburner M."/>
            <person name="Henderson S.N."/>
            <person name="Sutton G.G."/>
            <person name="Wortman J.R."/>
            <person name="Yandell M.D."/>
            <person name="Zhang Q."/>
            <person name="Chen L.X."/>
            <person name="Brandon R.C."/>
            <person name="Rogers Y.-H.C."/>
            <person name="Blazej R.G."/>
            <person name="Champe M."/>
            <person name="Pfeiffer B.D."/>
            <person name="Wan K.H."/>
            <person name="Doyle C."/>
            <person name="Baxter E.G."/>
            <person name="Helt G."/>
            <person name="Nelson C.R."/>
            <person name="Miklos G.L.G."/>
            <person name="Abril J.F."/>
            <person name="Agbayani A."/>
            <person name="An H.-J."/>
            <person name="Andrews-Pfannkoch C."/>
            <person name="Baldwin D."/>
            <person name="Ballew R.M."/>
            <person name="Basu A."/>
            <person name="Baxendale J."/>
            <person name="Bayraktaroglu L."/>
            <person name="Beasley E.M."/>
            <person name="Beeson K.Y."/>
            <person name="Benos P.V."/>
            <person name="Berman B.P."/>
            <person name="Bhandari D."/>
            <person name="Bolshakov S."/>
            <person name="Borkova D."/>
            <person name="Botchan M.R."/>
            <person name="Bouck J."/>
            <person name="Brokstein P."/>
            <person name="Brottier P."/>
            <person name="Burtis K.C."/>
            <person name="Busam D.A."/>
            <person name="Butler H."/>
            <person name="Cadieu E."/>
            <person name="Center A."/>
            <person name="Chandra I."/>
            <person name="Cherry J.M."/>
            <person name="Cawley S."/>
            <person name="Dahlke C."/>
            <person name="Davenport L.B."/>
            <person name="Davies P."/>
            <person name="de Pablos B."/>
            <person name="Delcher A."/>
            <person name="Deng Z."/>
            <person name="Mays A.D."/>
            <person name="Dew I."/>
            <person name="Dietz S.M."/>
            <person name="Dodson K."/>
            <person name="Doup L.E."/>
            <person name="Downes M."/>
            <person name="Dugan-Rocha S."/>
            <person name="Dunkov B.C."/>
            <person name="Dunn P."/>
            <person name="Durbin K.J."/>
            <person name="Evangelista C.C."/>
            <person name="Ferraz C."/>
            <person name="Ferriera S."/>
            <person name="Fleischmann W."/>
            <person name="Fosler C."/>
            <person name="Gabrielian A.E."/>
            <person name="Garg N.S."/>
            <person name="Gelbart W.M."/>
            <person name="Glasser K."/>
            <person name="Glodek A."/>
            <person name="Gong F."/>
            <person name="Gorrell J.H."/>
            <person name="Gu Z."/>
            <person name="Guan P."/>
            <person name="Harris M."/>
            <person name="Harris N.L."/>
            <person name="Harvey D.A."/>
            <person name="Heiman T.J."/>
            <person name="Hernandez J.R."/>
            <person name="Houck J."/>
            <person name="Hostin D."/>
            <person name="Houston K.A."/>
            <person name="Howland T.J."/>
            <person name="Wei M.-H."/>
            <person name="Ibegwam C."/>
            <person name="Jalali M."/>
            <person name="Kalush F."/>
            <person name="Karpen G.H."/>
            <person name="Ke Z."/>
            <person name="Kennison J.A."/>
            <person name="Ketchum K.A."/>
            <person name="Kimmel B.E."/>
            <person name="Kodira C.D."/>
            <person name="Kraft C.L."/>
            <person name="Kravitz S."/>
            <person name="Kulp D."/>
            <person name="Lai Z."/>
            <person name="Lasko P."/>
            <person name="Lei Y."/>
            <person name="Levitsky A.A."/>
            <person name="Li J.H."/>
            <person name="Li Z."/>
            <person name="Liang Y."/>
            <person name="Lin X."/>
            <person name="Liu X."/>
            <person name="Mattei B."/>
            <person name="McIntosh T.C."/>
            <person name="McLeod M.P."/>
            <person name="McPherson D."/>
            <person name="Merkulov G."/>
            <person name="Milshina N.V."/>
            <person name="Mobarry C."/>
            <person name="Morris J."/>
            <person name="Moshrefi A."/>
            <person name="Mount S.M."/>
            <person name="Moy M."/>
            <person name="Murphy B."/>
            <person name="Murphy L."/>
            <person name="Muzny D.M."/>
            <person name="Nelson D.L."/>
            <person name="Nelson D.R."/>
            <person name="Nelson K.A."/>
            <person name="Nixon K."/>
            <person name="Nusskern D.R."/>
            <person name="Pacleb J.M."/>
            <person name="Palazzolo M."/>
            <person name="Pittman G.S."/>
            <person name="Pan S."/>
            <person name="Pollard J."/>
            <person name="Puri V."/>
            <person name="Reese M.G."/>
            <person name="Reinert K."/>
            <person name="Remington K."/>
            <person name="Saunders R.D.C."/>
            <person name="Scheeler F."/>
            <person name="Shen H."/>
            <person name="Shue B.C."/>
            <person name="Siden-Kiamos I."/>
            <person name="Simpson M."/>
            <person name="Skupski M.P."/>
            <person name="Smith T.J."/>
            <person name="Spier E."/>
            <person name="Spradling A.C."/>
            <person name="Stapleton M."/>
            <person name="Strong R."/>
            <person name="Sun E."/>
            <person name="Svirskas R."/>
            <person name="Tector C."/>
            <person name="Turner R."/>
            <person name="Venter E."/>
            <person name="Wang A.H."/>
            <person name="Wang X."/>
            <person name="Wang Z.-Y."/>
            <person name="Wassarman D.A."/>
            <person name="Weinstock G.M."/>
            <person name="Weissenbach J."/>
            <person name="Williams S.M."/>
            <person name="Woodage T."/>
            <person name="Worley K.C."/>
            <person name="Wu D."/>
            <person name="Yang S."/>
            <person name="Yao Q.A."/>
            <person name="Ye J."/>
            <person name="Yeh R.-F."/>
            <person name="Zaveri J.S."/>
            <person name="Zhan M."/>
            <person name="Zhang G."/>
            <person name="Zhao Q."/>
            <person name="Zheng L."/>
            <person name="Zheng X.H."/>
            <person name="Zhong F.N."/>
            <person name="Zhong W."/>
            <person name="Zhou X."/>
            <person name="Zhu S.C."/>
            <person name="Zhu X."/>
            <person name="Smith H.O."/>
            <person name="Gibbs R.A."/>
            <person name="Myers E.W."/>
            <person name="Rubin G.M."/>
            <person name="Venter J.C."/>
        </authorList>
    </citation>
    <scope>NUCLEOTIDE SEQUENCE [LARGE SCALE GENOMIC DNA]</scope>
    <source>
        <strain evidence="4">Berkeley</strain>
    </source>
</reference>
<reference evidence="15 17" key="4">
    <citation type="journal article" date="2002" name="Genome Biol.">
        <title>Annotation of the Drosophila melanogaster euchromatic genome: a systematic review.</title>
        <authorList>
            <person name="Misra S."/>
            <person name="Crosby M.A."/>
            <person name="Mungall C.J."/>
            <person name="Matthews B.B."/>
            <person name="Campbell K.S."/>
            <person name="Hradecky P."/>
            <person name="Huang Y."/>
            <person name="Kaminker J.S."/>
            <person name="Millburn G.H."/>
            <person name="Prochnik S.E."/>
            <person name="Smith C.D."/>
            <person name="Tupy J.L."/>
            <person name="Whitfield E.J."/>
            <person name="Bayraktaroglu L."/>
            <person name="Berman B.P."/>
            <person name="Bettencourt B.R."/>
            <person name="Celniker S.E."/>
            <person name="de Grey A.D.N.J."/>
            <person name="Drysdale R.A."/>
            <person name="Harris N.L."/>
            <person name="Richter J."/>
            <person name="Russo S."/>
            <person name="Schroeder A.J."/>
            <person name="Shu S.Q."/>
            <person name="Stapleton M."/>
            <person name="Yamada C."/>
            <person name="Ashburner M."/>
            <person name="Gelbart W.M."/>
            <person name="Rubin G.M."/>
            <person name="Lewis S.E."/>
        </authorList>
    </citation>
    <scope>GENOME REANNOTATION</scope>
    <source>
        <strain>Berkeley</strain>
    </source>
</reference>
<reference evidence="15 19" key="5">
    <citation type="journal article" date="2002" name="Genome Biol.">
        <title>A Drosophila full-length cDNA resource.</title>
        <authorList>
            <person name="Stapleton M."/>
            <person name="Carlson J.W."/>
            <person name="Brokstein P."/>
            <person name="Yu C."/>
            <person name="Champe M."/>
            <person name="George R.A."/>
            <person name="Guarin H."/>
            <person name="Kronmiller B."/>
            <person name="Pacleb J.M."/>
            <person name="Park S."/>
            <person name="Wan K.H."/>
            <person name="Rubin G.M."/>
            <person name="Celniker S.E."/>
        </authorList>
    </citation>
    <scope>NUCLEOTIDE SEQUENCE [LARGE SCALE MRNA] (ISOFORM A)</scope>
    <source>
        <strain evidence="19">Berkeley</strain>
        <tissue evidence="6">Embryo</tissue>
    </source>
</reference>
<reference evidence="15" key="6">
    <citation type="journal article" date="2004" name="Cell">
        <title>Control of dendritic branching and tiling by the Tricornered-kinase/Furry signaling pathway in Drosophila sensory neurons.</title>
        <authorList>
            <person name="Emoto K."/>
            <person name="He Y."/>
            <person name="Ye B."/>
            <person name="Grueber W.B."/>
            <person name="Adler P.N."/>
            <person name="Jan L.Y."/>
            <person name="Jan Y.-N."/>
        </authorList>
    </citation>
    <scope>FUNCTION</scope>
    <scope>ENZYME ACTIVITY</scope>
    <scope>TISSUE SPECIFICITY</scope>
    <scope>PHOSPHORYLATION AT SER-292 AND THR-453</scope>
    <scope>MUTAGENESIS OF SER-292 AND THR-453</scope>
    <scope>DISRUPTION PHENOTYPE</scope>
</reference>
<reference evidence="15" key="7">
    <citation type="journal article" date="2005" name="Mol. Biol. Cell">
        <title>Drosophila Mob family proteins interact with the related tricornered (Trc) and warts (Wts) kinases.</title>
        <authorList>
            <person name="He Y."/>
            <person name="Emoto K."/>
            <person name="Fang X."/>
            <person name="Ren N."/>
            <person name="Tian X."/>
            <person name="Jan Y.-N."/>
            <person name="Adler P.N."/>
        </authorList>
    </citation>
    <scope>FUNCTION</scope>
    <scope>INTERACTION WITH MOB1</scope>
    <scope>SUBCELLULAR LOCATION</scope>
</reference>
<reference key="8">
    <citation type="journal article" date="2020" name="Elife">
        <title>Ser/Thr kinase Trc controls neurite outgrowth in Drosophila by modulating microtubule-microtubule sliding.</title>
        <authorList>
            <person name="Norkett R."/>
            <person name="Del Castillo U."/>
            <person name="Lu W."/>
            <person name="Gelfand V.I."/>
        </authorList>
    </citation>
    <scope>FUNCTION</scope>
    <scope>CATALYTIC ACTIVITY</scope>
    <scope>ACTIVITY REGULATION</scope>
    <scope>TISSUE SPECIFICITY</scope>
    <scope>DISRUPTION PHENOTYPE</scope>
    <scope>MUTAGENESIS OF LYS-122 AND THR-453</scope>
</reference>
<protein>
    <recommendedName>
        <fullName evidence="13 21">Serine/threonine-protein kinase tricornered</fullName>
        <ecNumber evidence="7 16">2.7.11.1</ecNumber>
    </recommendedName>
    <alternativeName>
        <fullName evidence="14">NDR protein kinase</fullName>
    </alternativeName>
    <alternativeName>
        <fullName>Serine/threonine-protein kinase 38-like</fullName>
    </alternativeName>
    <alternativeName>
        <fullName evidence="21">Serine/threonine-protein kinase tricorner</fullName>
    </alternativeName>
</protein>
<evidence type="ECO:0000255" key="1">
    <source>
        <dbReference type="PROSITE-ProRule" id="PRU00159"/>
    </source>
</evidence>
<evidence type="ECO:0000255" key="2">
    <source>
        <dbReference type="PROSITE-ProRule" id="PRU00618"/>
    </source>
</evidence>
<evidence type="ECO:0000255" key="3">
    <source>
        <dbReference type="PROSITE-ProRule" id="PRU10027"/>
    </source>
</evidence>
<evidence type="ECO:0000269" key="4">
    <source>
    </source>
</evidence>
<evidence type="ECO:0000269" key="5">
    <source>
    </source>
</evidence>
<evidence type="ECO:0000269" key="6">
    <source>
    </source>
</evidence>
<evidence type="ECO:0000269" key="7">
    <source>
    </source>
</evidence>
<evidence type="ECO:0000269" key="8">
    <source>
    </source>
</evidence>
<evidence type="ECO:0000269" key="9">
    <source>
    </source>
</evidence>
<evidence type="ECO:0000269" key="10">
    <source>
    </source>
</evidence>
<evidence type="ECO:0000303" key="11">
    <source>
    </source>
</evidence>
<evidence type="ECO:0000303" key="12">
    <source>
    </source>
</evidence>
<evidence type="ECO:0000303" key="13">
    <source>
    </source>
</evidence>
<evidence type="ECO:0000303" key="14">
    <source>
    </source>
</evidence>
<evidence type="ECO:0000305" key="15"/>
<evidence type="ECO:0000305" key="16">
    <source>
    </source>
</evidence>
<evidence type="ECO:0000312" key="17">
    <source>
        <dbReference type="EMBL" id="AAF49104.1"/>
    </source>
</evidence>
<evidence type="ECO:0000312" key="18">
    <source>
        <dbReference type="EMBL" id="AAF97511.1"/>
    </source>
</evidence>
<evidence type="ECO:0000312" key="19">
    <source>
        <dbReference type="EMBL" id="AAK93304.1"/>
    </source>
</evidence>
<evidence type="ECO:0000312" key="20">
    <source>
        <dbReference type="EMBL" id="CAA84486.1"/>
    </source>
</evidence>
<evidence type="ECO:0000312" key="21">
    <source>
        <dbReference type="FlyBase" id="FBgn0003744"/>
    </source>
</evidence>
<accession>Q9NBK5</accession>
<accession>Q24464</accession>
<accession>Q9NGW6</accession>
<accession>Q9VW46</accession>